<proteinExistence type="inferred from homology"/>
<feature type="chain" id="PRO_1000134813" description="Transcriptional regulator MraZ">
    <location>
        <begin position="1"/>
        <end position="151"/>
    </location>
</feature>
<feature type="domain" description="SpoVT-AbrB 1" evidence="2">
    <location>
        <begin position="5"/>
        <end position="51"/>
    </location>
</feature>
<feature type="domain" description="SpoVT-AbrB 2" evidence="2">
    <location>
        <begin position="81"/>
        <end position="124"/>
    </location>
</feature>
<gene>
    <name evidence="1" type="primary">mraZ</name>
    <name type="ordered locus">NGK_1835</name>
</gene>
<comment type="subunit">
    <text evidence="1">Forms oligomers.</text>
</comment>
<comment type="subcellular location">
    <subcellularLocation>
        <location evidence="1">Cytoplasm</location>
        <location evidence="1">Nucleoid</location>
    </subcellularLocation>
</comment>
<comment type="similarity">
    <text evidence="1">Belongs to the MraZ family.</text>
</comment>
<organism>
    <name type="scientific">Neisseria gonorrhoeae (strain NCCP11945)</name>
    <dbReference type="NCBI Taxonomy" id="521006"/>
    <lineage>
        <taxon>Bacteria</taxon>
        <taxon>Pseudomonadati</taxon>
        <taxon>Pseudomonadota</taxon>
        <taxon>Betaproteobacteria</taxon>
        <taxon>Neisseriales</taxon>
        <taxon>Neisseriaceae</taxon>
        <taxon>Neisseria</taxon>
    </lineage>
</organism>
<keyword id="KW-0963">Cytoplasm</keyword>
<keyword id="KW-0238">DNA-binding</keyword>
<keyword id="KW-0677">Repeat</keyword>
<keyword id="KW-0804">Transcription</keyword>
<keyword id="KW-0805">Transcription regulation</keyword>
<name>MRAZ_NEIG2</name>
<evidence type="ECO:0000255" key="1">
    <source>
        <dbReference type="HAMAP-Rule" id="MF_01008"/>
    </source>
</evidence>
<evidence type="ECO:0000255" key="2">
    <source>
        <dbReference type="PROSITE-ProRule" id="PRU01076"/>
    </source>
</evidence>
<dbReference type="EMBL" id="CP001050">
    <property type="protein sequence ID" value="ACF30474.1"/>
    <property type="molecule type" value="Genomic_DNA"/>
</dbReference>
<dbReference type="RefSeq" id="WP_003689463.1">
    <property type="nucleotide sequence ID" value="NC_011035.1"/>
</dbReference>
<dbReference type="SMR" id="B4RQD8"/>
<dbReference type="GeneID" id="66753751"/>
<dbReference type="KEGG" id="ngk:NGK_1835"/>
<dbReference type="HOGENOM" id="CLU_107907_2_0_4"/>
<dbReference type="Proteomes" id="UP000002564">
    <property type="component" value="Chromosome"/>
</dbReference>
<dbReference type="GO" id="GO:0005737">
    <property type="term" value="C:cytoplasm"/>
    <property type="evidence" value="ECO:0007669"/>
    <property type="project" value="UniProtKB-UniRule"/>
</dbReference>
<dbReference type="GO" id="GO:0009295">
    <property type="term" value="C:nucleoid"/>
    <property type="evidence" value="ECO:0007669"/>
    <property type="project" value="UniProtKB-SubCell"/>
</dbReference>
<dbReference type="GO" id="GO:0003700">
    <property type="term" value="F:DNA-binding transcription factor activity"/>
    <property type="evidence" value="ECO:0007669"/>
    <property type="project" value="UniProtKB-UniRule"/>
</dbReference>
<dbReference type="GO" id="GO:0000976">
    <property type="term" value="F:transcription cis-regulatory region binding"/>
    <property type="evidence" value="ECO:0007669"/>
    <property type="project" value="TreeGrafter"/>
</dbReference>
<dbReference type="GO" id="GO:2000143">
    <property type="term" value="P:negative regulation of DNA-templated transcription initiation"/>
    <property type="evidence" value="ECO:0007669"/>
    <property type="project" value="TreeGrafter"/>
</dbReference>
<dbReference type="CDD" id="cd16321">
    <property type="entry name" value="MraZ_C"/>
    <property type="match status" value="1"/>
</dbReference>
<dbReference type="CDD" id="cd16320">
    <property type="entry name" value="MraZ_N"/>
    <property type="match status" value="1"/>
</dbReference>
<dbReference type="FunFam" id="3.40.1550.20:FF:000006">
    <property type="entry name" value="Transcriptional regulator MraZ"/>
    <property type="match status" value="1"/>
</dbReference>
<dbReference type="Gene3D" id="3.40.1550.20">
    <property type="entry name" value="Transcriptional regulator MraZ domain"/>
    <property type="match status" value="1"/>
</dbReference>
<dbReference type="HAMAP" id="MF_01008">
    <property type="entry name" value="MraZ"/>
    <property type="match status" value="1"/>
</dbReference>
<dbReference type="InterPro" id="IPR003444">
    <property type="entry name" value="MraZ"/>
</dbReference>
<dbReference type="InterPro" id="IPR035644">
    <property type="entry name" value="MraZ_C"/>
</dbReference>
<dbReference type="InterPro" id="IPR020603">
    <property type="entry name" value="MraZ_dom"/>
</dbReference>
<dbReference type="InterPro" id="IPR035642">
    <property type="entry name" value="MraZ_N"/>
</dbReference>
<dbReference type="InterPro" id="IPR038619">
    <property type="entry name" value="MraZ_sf"/>
</dbReference>
<dbReference type="InterPro" id="IPR007159">
    <property type="entry name" value="SpoVT-AbrB_dom"/>
</dbReference>
<dbReference type="InterPro" id="IPR037914">
    <property type="entry name" value="SpoVT-AbrB_sf"/>
</dbReference>
<dbReference type="NCBIfam" id="TIGR00242">
    <property type="entry name" value="division/cell wall cluster transcriptional repressor MraZ"/>
    <property type="match status" value="1"/>
</dbReference>
<dbReference type="PANTHER" id="PTHR34701">
    <property type="entry name" value="TRANSCRIPTIONAL REGULATOR MRAZ"/>
    <property type="match status" value="1"/>
</dbReference>
<dbReference type="PANTHER" id="PTHR34701:SF1">
    <property type="entry name" value="TRANSCRIPTIONAL REGULATOR MRAZ"/>
    <property type="match status" value="1"/>
</dbReference>
<dbReference type="Pfam" id="PF02381">
    <property type="entry name" value="MraZ"/>
    <property type="match status" value="2"/>
</dbReference>
<dbReference type="SUPFAM" id="SSF89447">
    <property type="entry name" value="AbrB/MazE/MraZ-like"/>
    <property type="match status" value="1"/>
</dbReference>
<dbReference type="PROSITE" id="PS51740">
    <property type="entry name" value="SPOVT_ABRB"/>
    <property type="match status" value="2"/>
</dbReference>
<accession>B4RQD8</accession>
<reference key="1">
    <citation type="journal article" date="2008" name="J. Bacteriol.">
        <title>Complete genome sequence of Neisseria gonorrhoeae NCCP11945.</title>
        <authorList>
            <person name="Chung G.T."/>
            <person name="Yoo J.S."/>
            <person name="Oh H.B."/>
            <person name="Lee Y.S."/>
            <person name="Cha S.H."/>
            <person name="Kim S.J."/>
            <person name="Yoo C.K."/>
        </authorList>
    </citation>
    <scope>NUCLEOTIDE SEQUENCE [LARGE SCALE GENOMIC DNA]</scope>
    <source>
        <strain>NCCP11945</strain>
    </source>
</reference>
<sequence length="151" mass="17186">MFGGAHELSIDSKGRLAVPAKFRDILSRLYTPAVVATLESKHKLLMYPVAEWEKVAAQLLNLKVADNPVLRRFQNLLLHNAEILEWDSAGRVLVPAGLRKRVDFDREVVLVGRANRLELWGREQWEAEMVQALDDDPDELAFQLSQTDLQL</sequence>
<protein>
    <recommendedName>
        <fullName>Transcriptional regulator MraZ</fullName>
    </recommendedName>
</protein>